<reference key="1">
    <citation type="journal article" date="2009" name="BMC Genomics">
        <title>Analysis of the Rickettsia africae genome reveals that virulence acquisition in Rickettsia species may be explained by genome reduction.</title>
        <authorList>
            <person name="Fournier P.-E."/>
            <person name="El Karkouri K."/>
            <person name="Leroy Q."/>
            <person name="Robert C."/>
            <person name="Giumelli B."/>
            <person name="Renesto P."/>
            <person name="Socolovschi C."/>
            <person name="Parola P."/>
            <person name="Audic S."/>
            <person name="Raoult D."/>
        </authorList>
    </citation>
    <scope>NUCLEOTIDE SEQUENCE [LARGE SCALE GENOMIC DNA]</scope>
    <source>
        <strain>ESF-5</strain>
    </source>
</reference>
<feature type="chain" id="PRO_1000205798" description="Acyl-[acyl-carrier-protein]--UDP-N-acetylglucosamine O-acyltransferase">
    <location>
        <begin position="1"/>
        <end position="264"/>
    </location>
</feature>
<proteinExistence type="inferred from homology"/>
<dbReference type="EC" id="2.3.1.129" evidence="1"/>
<dbReference type="EMBL" id="CP001612">
    <property type="protein sequence ID" value="ACP52996.1"/>
    <property type="molecule type" value="Genomic_DNA"/>
</dbReference>
<dbReference type="RefSeq" id="WP_004997001.1">
    <property type="nucleotide sequence ID" value="NC_012633.1"/>
</dbReference>
<dbReference type="SMR" id="C3PM36"/>
<dbReference type="GeneID" id="95361755"/>
<dbReference type="KEGG" id="raf:RAF_ORF0008"/>
<dbReference type="HOGENOM" id="CLU_061249_0_0_5"/>
<dbReference type="UniPathway" id="UPA00359">
    <property type="reaction ID" value="UER00477"/>
</dbReference>
<dbReference type="Proteomes" id="UP000002305">
    <property type="component" value="Chromosome"/>
</dbReference>
<dbReference type="GO" id="GO:0005737">
    <property type="term" value="C:cytoplasm"/>
    <property type="evidence" value="ECO:0007669"/>
    <property type="project" value="UniProtKB-SubCell"/>
</dbReference>
<dbReference type="GO" id="GO:0016020">
    <property type="term" value="C:membrane"/>
    <property type="evidence" value="ECO:0007669"/>
    <property type="project" value="GOC"/>
</dbReference>
<dbReference type="GO" id="GO:0008780">
    <property type="term" value="F:acyl-[acyl-carrier-protein]-UDP-N-acetylglucosamine O-acyltransferase activity"/>
    <property type="evidence" value="ECO:0007669"/>
    <property type="project" value="UniProtKB-UniRule"/>
</dbReference>
<dbReference type="GO" id="GO:0009245">
    <property type="term" value="P:lipid A biosynthetic process"/>
    <property type="evidence" value="ECO:0007669"/>
    <property type="project" value="UniProtKB-UniRule"/>
</dbReference>
<dbReference type="CDD" id="cd03351">
    <property type="entry name" value="LbH_UDP-GlcNAc_AT"/>
    <property type="match status" value="1"/>
</dbReference>
<dbReference type="Gene3D" id="2.160.10.10">
    <property type="entry name" value="Hexapeptide repeat proteins"/>
    <property type="match status" value="1"/>
</dbReference>
<dbReference type="Gene3D" id="1.20.1180.10">
    <property type="entry name" value="Udp N-acetylglucosamine O-acyltransferase, C-terminal domain"/>
    <property type="match status" value="1"/>
</dbReference>
<dbReference type="HAMAP" id="MF_00387">
    <property type="entry name" value="LpxA"/>
    <property type="match status" value="1"/>
</dbReference>
<dbReference type="InterPro" id="IPR029098">
    <property type="entry name" value="Acetyltransf_C"/>
</dbReference>
<dbReference type="InterPro" id="IPR037157">
    <property type="entry name" value="Acetyltransf_C_sf"/>
</dbReference>
<dbReference type="InterPro" id="IPR001451">
    <property type="entry name" value="Hexapep"/>
</dbReference>
<dbReference type="InterPro" id="IPR018357">
    <property type="entry name" value="Hexapep_transf_CS"/>
</dbReference>
<dbReference type="InterPro" id="IPR010137">
    <property type="entry name" value="Lipid_A_LpxA"/>
</dbReference>
<dbReference type="InterPro" id="IPR011004">
    <property type="entry name" value="Trimer_LpxA-like_sf"/>
</dbReference>
<dbReference type="NCBIfam" id="TIGR01852">
    <property type="entry name" value="lipid_A_lpxA"/>
    <property type="match status" value="1"/>
</dbReference>
<dbReference type="NCBIfam" id="NF003657">
    <property type="entry name" value="PRK05289.1"/>
    <property type="match status" value="1"/>
</dbReference>
<dbReference type="PANTHER" id="PTHR43480">
    <property type="entry name" value="ACYL-[ACYL-CARRIER-PROTEIN]--UDP-N-ACETYLGLUCOSAMINE O-ACYLTRANSFERASE"/>
    <property type="match status" value="1"/>
</dbReference>
<dbReference type="PANTHER" id="PTHR43480:SF1">
    <property type="entry name" value="ACYL-[ACYL-CARRIER-PROTEIN]--UDP-N-ACETYLGLUCOSAMINE O-ACYLTRANSFERASE, MITOCHONDRIAL-RELATED"/>
    <property type="match status" value="1"/>
</dbReference>
<dbReference type="Pfam" id="PF13720">
    <property type="entry name" value="Acetyltransf_11"/>
    <property type="match status" value="1"/>
</dbReference>
<dbReference type="Pfam" id="PF00132">
    <property type="entry name" value="Hexapep"/>
    <property type="match status" value="2"/>
</dbReference>
<dbReference type="PIRSF" id="PIRSF000456">
    <property type="entry name" value="UDP-GlcNAc_acltr"/>
    <property type="match status" value="1"/>
</dbReference>
<dbReference type="SUPFAM" id="SSF51161">
    <property type="entry name" value="Trimeric LpxA-like enzymes"/>
    <property type="match status" value="1"/>
</dbReference>
<dbReference type="PROSITE" id="PS00101">
    <property type="entry name" value="HEXAPEP_TRANSFERASES"/>
    <property type="match status" value="1"/>
</dbReference>
<sequence length="264" mass="28356">MSNSNIHTTAVIAEGAKLGKNVKIGPYCIIGPEVVLHDNVELKSHVVIEGITEIGENTVIYPFASIGQPPQILKYANERSSTIIGSNNTIREYVTVQAGSQGGGMMTRVGNNNLFMVGVHIGHDCKIGNNVVFANYVSLAGHIGVGDYAIIGGLSAVHQYARIGEYSMIGGLSPVGADVIPFGLVSSKRAVLEGLNLIGMNRKGFDKVKSLSALKAIEEIFSGEGNFAERIKQVAEKYNNNSIVIQIIDFLNQDSSRAFCRFEK</sequence>
<name>LPXA_RICAE</name>
<organism>
    <name type="scientific">Rickettsia africae (strain ESF-5)</name>
    <dbReference type="NCBI Taxonomy" id="347255"/>
    <lineage>
        <taxon>Bacteria</taxon>
        <taxon>Pseudomonadati</taxon>
        <taxon>Pseudomonadota</taxon>
        <taxon>Alphaproteobacteria</taxon>
        <taxon>Rickettsiales</taxon>
        <taxon>Rickettsiaceae</taxon>
        <taxon>Rickettsieae</taxon>
        <taxon>Rickettsia</taxon>
        <taxon>spotted fever group</taxon>
    </lineage>
</organism>
<protein>
    <recommendedName>
        <fullName evidence="1">Acyl-[acyl-carrier-protein]--UDP-N-acetylglucosamine O-acyltransferase</fullName>
        <shortName evidence="1">UDP-N-acetylglucosamine acyltransferase</shortName>
        <ecNumber evidence="1">2.3.1.129</ecNumber>
    </recommendedName>
</protein>
<gene>
    <name evidence="1" type="primary">lpxA</name>
    <name type="ordered locus">RAF_ORF0008</name>
</gene>
<keyword id="KW-0012">Acyltransferase</keyword>
<keyword id="KW-0963">Cytoplasm</keyword>
<keyword id="KW-0441">Lipid A biosynthesis</keyword>
<keyword id="KW-0444">Lipid biosynthesis</keyword>
<keyword id="KW-0443">Lipid metabolism</keyword>
<keyword id="KW-0677">Repeat</keyword>
<keyword id="KW-0808">Transferase</keyword>
<accession>C3PM36</accession>
<comment type="function">
    <text evidence="1">Involved in the biosynthesis of lipid A, a phosphorylated glycolipid that anchors the lipopolysaccharide to the outer membrane of the cell.</text>
</comment>
<comment type="catalytic activity">
    <reaction evidence="1">
        <text>a (3R)-hydroxyacyl-[ACP] + UDP-N-acetyl-alpha-D-glucosamine = a UDP-3-O-[(3R)-3-hydroxyacyl]-N-acetyl-alpha-D-glucosamine + holo-[ACP]</text>
        <dbReference type="Rhea" id="RHEA:67812"/>
        <dbReference type="Rhea" id="RHEA-COMP:9685"/>
        <dbReference type="Rhea" id="RHEA-COMP:9945"/>
        <dbReference type="ChEBI" id="CHEBI:57705"/>
        <dbReference type="ChEBI" id="CHEBI:64479"/>
        <dbReference type="ChEBI" id="CHEBI:78827"/>
        <dbReference type="ChEBI" id="CHEBI:173225"/>
        <dbReference type="EC" id="2.3.1.129"/>
    </reaction>
</comment>
<comment type="pathway">
    <text evidence="1">Glycolipid biosynthesis; lipid IV(A) biosynthesis; lipid IV(A) from (3R)-3-hydroxytetradecanoyl-[acyl-carrier-protein] and UDP-N-acetyl-alpha-D-glucosamine: step 1/6.</text>
</comment>
<comment type="subunit">
    <text evidence="1">Homotrimer.</text>
</comment>
<comment type="subcellular location">
    <subcellularLocation>
        <location evidence="1">Cytoplasm</location>
    </subcellularLocation>
</comment>
<comment type="similarity">
    <text evidence="1">Belongs to the transferase hexapeptide repeat family. LpxA subfamily.</text>
</comment>
<evidence type="ECO:0000255" key="1">
    <source>
        <dbReference type="HAMAP-Rule" id="MF_00387"/>
    </source>
</evidence>